<feature type="chain" id="PRO_0000447310" description="T cell receptor beta joining 2-4">
    <location>
        <begin position="1" status="less than"/>
        <end position="16" status="greater than"/>
    </location>
</feature>
<feature type="non-terminal residue">
    <location>
        <position position="1"/>
    </location>
</feature>
<feature type="non-terminal residue">
    <location>
        <position position="16"/>
    </location>
</feature>
<proteinExistence type="predicted"/>
<name>TJB24_HUMAN</name>
<gene>
    <name evidence="6" type="primary">TRBJ2-4</name>
</gene>
<keyword id="KW-1064">Adaptive immunity</keyword>
<keyword id="KW-1003">Cell membrane</keyword>
<keyword id="KW-0391">Immunity</keyword>
<keyword id="KW-0472">Membrane</keyword>
<keyword id="KW-0675">Receptor</keyword>
<keyword id="KW-1185">Reference proteome</keyword>
<keyword id="KW-1279">T cell receptor</keyword>
<evidence type="ECO:0000303" key="1">
    <source>
    </source>
</evidence>
<evidence type="ECO:0000303" key="2">
    <source>
    </source>
</evidence>
<evidence type="ECO:0000303" key="3">
    <source>
    </source>
</evidence>
<evidence type="ECO:0000303" key="4">
    <source>
    </source>
</evidence>
<evidence type="ECO:0000303" key="5">
    <source>
    </source>
</evidence>
<evidence type="ECO:0000312" key="6">
    <source>
        <dbReference type="HGNC" id="HGNC:12172"/>
    </source>
</evidence>
<reference key="1">
    <citation type="journal article" date="2003" name="Nature">
        <title>The DNA sequence of human chromosome 7.</title>
        <authorList>
            <person name="Hillier L.W."/>
            <person name="Fulton R.S."/>
            <person name="Fulton L.A."/>
            <person name="Graves T.A."/>
            <person name="Pepin K.H."/>
            <person name="Wagner-McPherson C."/>
            <person name="Layman D."/>
            <person name="Maas J."/>
            <person name="Jaeger S."/>
            <person name="Walker R."/>
            <person name="Wylie K."/>
            <person name="Sekhon M."/>
            <person name="Becker M.C."/>
            <person name="O'Laughlin M.D."/>
            <person name="Schaller M.E."/>
            <person name="Fewell G.A."/>
            <person name="Delehaunty K.D."/>
            <person name="Miner T.L."/>
            <person name="Nash W.E."/>
            <person name="Cordes M."/>
            <person name="Du H."/>
            <person name="Sun H."/>
            <person name="Edwards J."/>
            <person name="Bradshaw-Cordum H."/>
            <person name="Ali J."/>
            <person name="Andrews S."/>
            <person name="Isak A."/>
            <person name="Vanbrunt A."/>
            <person name="Nguyen C."/>
            <person name="Du F."/>
            <person name="Lamar B."/>
            <person name="Courtney L."/>
            <person name="Kalicki J."/>
            <person name="Ozersky P."/>
            <person name="Bielicki L."/>
            <person name="Scott K."/>
            <person name="Holmes A."/>
            <person name="Harkins R."/>
            <person name="Harris A."/>
            <person name="Strong C.M."/>
            <person name="Hou S."/>
            <person name="Tomlinson C."/>
            <person name="Dauphin-Kohlberg S."/>
            <person name="Kozlowicz-Reilly A."/>
            <person name="Leonard S."/>
            <person name="Rohlfing T."/>
            <person name="Rock S.M."/>
            <person name="Tin-Wollam A.-M."/>
            <person name="Abbott A."/>
            <person name="Minx P."/>
            <person name="Maupin R."/>
            <person name="Strowmatt C."/>
            <person name="Latreille P."/>
            <person name="Miller N."/>
            <person name="Johnson D."/>
            <person name="Murray J."/>
            <person name="Woessner J.P."/>
            <person name="Wendl M.C."/>
            <person name="Yang S.-P."/>
            <person name="Schultz B.R."/>
            <person name="Wallis J.W."/>
            <person name="Spieth J."/>
            <person name="Bieri T.A."/>
            <person name="Nelson J.O."/>
            <person name="Berkowicz N."/>
            <person name="Wohldmann P.E."/>
            <person name="Cook L.L."/>
            <person name="Hickenbotham M.T."/>
            <person name="Eldred J."/>
            <person name="Williams D."/>
            <person name="Bedell J.A."/>
            <person name="Mardis E.R."/>
            <person name="Clifton S.W."/>
            <person name="Chissoe S.L."/>
            <person name="Marra M.A."/>
            <person name="Raymond C."/>
            <person name="Haugen E."/>
            <person name="Gillett W."/>
            <person name="Zhou Y."/>
            <person name="James R."/>
            <person name="Phelps K."/>
            <person name="Iadanoto S."/>
            <person name="Bubb K."/>
            <person name="Simms E."/>
            <person name="Levy R."/>
            <person name="Clendenning J."/>
            <person name="Kaul R."/>
            <person name="Kent W.J."/>
            <person name="Furey T.S."/>
            <person name="Baertsch R.A."/>
            <person name="Brent M.R."/>
            <person name="Keibler E."/>
            <person name="Flicek P."/>
            <person name="Bork P."/>
            <person name="Suyama M."/>
            <person name="Bailey J.A."/>
            <person name="Portnoy M.E."/>
            <person name="Torrents D."/>
            <person name="Chinwalla A.T."/>
            <person name="Gish W.R."/>
            <person name="Eddy S.R."/>
            <person name="McPherson J.D."/>
            <person name="Olson M.V."/>
            <person name="Eichler E.E."/>
            <person name="Green E.D."/>
            <person name="Waterston R.H."/>
            <person name="Wilson R.K."/>
        </authorList>
    </citation>
    <scope>NUCLEOTIDE SEQUENCE [LARGE SCALE GENOMIC DNA] (IMGT ALLELE TRBJ2-4*01)</scope>
</reference>
<reference key="2">
    <citation type="book" date="2001" name="The T Cell Receptor FactsBook.">
        <title>The T Cell Receptor FactsBook.</title>
        <editorList>
            <person name="Lefranc M.P."/>
            <person name="Lefranc G."/>
        </editorList>
        <authorList>
            <person name="Lefranc M.P."/>
            <person name="Lefranc G."/>
        </authorList>
    </citation>
    <scope>NOMENCLATURE</scope>
</reference>
<reference key="3">
    <citation type="journal article" date="2004" name="Nat. Rev. Immunol.">
        <title>The many important facets of T-cell repertoire diversity.</title>
        <authorList>
            <person name="Nikolich-Zugich J."/>
            <person name="Slifka M.K."/>
            <person name="Messaoudi I."/>
        </authorList>
    </citation>
    <scope>REVIEW ON T CELL REPERTOIRE DIVERSITY</scope>
</reference>
<reference key="4">
    <citation type="journal article" date="2010" name="Cold Spring Harb. Perspect. Biol.">
        <title>Structural biology of the T-cell receptor: insights into receptor assembly, ligand recognition, and initiation of signaling.</title>
        <authorList>
            <person name="Wucherpfennig K.W."/>
            <person name="Gagnon E."/>
            <person name="Call M.J."/>
            <person name="Huseby E.S."/>
            <person name="Call M.E."/>
        </authorList>
    </citation>
    <scope>REVIEW ON T CELL RECEPTOR-CD3 COMPLEX ASSEMBLY</scope>
    <scope>SUBCELLULAR LOCATION</scope>
</reference>
<reference key="5">
    <citation type="journal article" date="2013" name="Nat. Rev. Immunol.">
        <title>T cell receptor signalling networks: branched, diversified and bounded.</title>
        <authorList>
            <person name="Brownlie R.J."/>
            <person name="Zamoyska R."/>
        </authorList>
    </citation>
    <scope>REVIEW ON T CELL RECEPTOR SIGNALING</scope>
</reference>
<reference key="6">
    <citation type="journal article" date="2014" name="Front. Immunol.">
        <title>Immunoglobulin and T Cell Receptor Genes: IMGT((R)) and the Birth and Rise of Immunoinformatics.</title>
        <authorList>
            <person name="Lefranc M.P."/>
        </authorList>
    </citation>
    <scope>NOMENCLATURE</scope>
</reference>
<reference key="7">
    <citation type="journal article" date="2015" name="Annu. Rev. Immunol.">
        <title>T cell antigen receptor recognition of antigen-presenting molecules.</title>
        <authorList>
            <person name="Rossjohn J."/>
            <person name="Gras S."/>
            <person name="Miles J.J."/>
            <person name="Turner S.J."/>
            <person name="Godfrey D.I."/>
            <person name="McCluskey J."/>
        </authorList>
    </citation>
    <scope>REVIEW ON FUNCTION</scope>
</reference>
<organism>
    <name type="scientific">Homo sapiens</name>
    <name type="common">Human</name>
    <dbReference type="NCBI Taxonomy" id="9606"/>
    <lineage>
        <taxon>Eukaryota</taxon>
        <taxon>Metazoa</taxon>
        <taxon>Chordata</taxon>
        <taxon>Craniata</taxon>
        <taxon>Vertebrata</taxon>
        <taxon>Euteleostomi</taxon>
        <taxon>Mammalia</taxon>
        <taxon>Eutheria</taxon>
        <taxon>Euarchontoglires</taxon>
        <taxon>Primates</taxon>
        <taxon>Haplorrhini</taxon>
        <taxon>Catarrhini</taxon>
        <taxon>Hominidae</taxon>
        <taxon>Homo</taxon>
    </lineage>
</organism>
<protein>
    <recommendedName>
        <fullName>T cell receptor beta joining 2-4</fullName>
    </recommendedName>
</protein>
<sequence length="16" mass="1738">AKNIQYFGAGTRLSVL</sequence>
<comment type="function">
    <text evidence="1 3 4 5">J region of the variable domain of T cell receptor (TR) beta chain that participates in the antigen recognition (PubMed:24600447). Alpha-beta T cell receptors are antigen specific receptors which are essential to the immune response and are present on the cell surface of T lymphocytes. Recognize peptide-major histocompatibility (MH) (pMH) complexes that are displayed by antigen presenting cells (APC), a prerequisite for efficient T cell adaptive immunity against pathogens (PubMed:25493333). Binding of alpha-beta TR to pMH complex initiates TR-CD3 clustering on the cell surface and intracellular activation of LCK that phosphorylates the ITAM motifs of CD3G, CD3D, CD3E and CD247 enabling the recruitment of ZAP70. In turn ZAP70 phosphorylates LAT, which recruits numerous signaling molecules to form the LAT signalosome. The LAT signalosome propagates signal branching to three major signaling pathways, the calcium, the mitogen-activated protein kinase (MAPK) kinase and the nuclear factor NF-kappa-B (NF-kB) pathways, leading to the mobilization of transcription factors that are critical for gene expression and essential for T cell growth and differentiation (PubMed:23524462). The T cell repertoire is generated in the thymus, by V-(D)-J rearrangement. This repertoire is then shaped by intrathymic selection events to generate a peripheral T cell pool of self-MH restricted, non-autoaggressive T cells. Post-thymic interaction of alpha-beta TR with the pMH complexes shapes TR structural and functional avidity (PubMed:15040585).</text>
</comment>
<comment type="subunit">
    <text evidence="2">Alpha-beta TR is a heterodimer composed of an alpha and beta chain; disulfide-linked. The alpha-beta TR is associated with the transmembrane signaling CD3 coreceptor proteins to form the TR-CD3 (TcR or TCR). The assembly of alpha-beta TR heterodimers with CD3 occurs in the endoplasmic reticulum where a single alpha-beta TR heterodimer associates with one CD3D-CD3E heterodimer, one CD3G-CD3E heterodimer and one CD247 homodimer forming a stable octameric structure. CD3D-CD3E and CD3G-CD3E heterodimers preferentially associate with TR alpha and TR beta chains, respectively. The association of the CD247 homodimer is the last step of TcR assembly in the endoplasmic reticulum and is required for transport to the cell surface.</text>
</comment>
<comment type="subcellular location">
    <subcellularLocation>
        <location evidence="2">Cell membrane</location>
    </subcellularLocation>
</comment>
<accession>A0A0A0MT87</accession>
<dbReference type="EMBL" id="AC239618">
    <property type="status" value="NOT_ANNOTATED_CDS"/>
    <property type="molecule type" value="Genomic_DNA"/>
</dbReference>
<dbReference type="EMBL" id="AC245427">
    <property type="status" value="NOT_ANNOTATED_CDS"/>
    <property type="molecule type" value="Genomic_DNA"/>
</dbReference>
<dbReference type="IMGT_GENE-DB" id="TRBJ2-4"/>
<dbReference type="BioMuta" id="TRBJ2-4"/>
<dbReference type="UCSC" id="uc064itm.1">
    <property type="organism name" value="human"/>
</dbReference>
<dbReference type="AGR" id="HGNC:12172"/>
<dbReference type="GeneCards" id="TRBJ2-4"/>
<dbReference type="HGNC" id="HGNC:12172">
    <property type="gene designation" value="TRBJ2-4"/>
</dbReference>
<dbReference type="neXtProt" id="NX_A0A0A0MT87"/>
<dbReference type="HOGENOM" id="CLU_221942_7_2_1"/>
<dbReference type="InParanoid" id="A0A0A0MT87"/>
<dbReference type="PAN-GO" id="A0A0A0MT87">
    <property type="GO annotations" value="0 GO annotations based on evolutionary models"/>
</dbReference>
<dbReference type="ChiTaRS" id="TRBJ2-4">
    <property type="organism name" value="human"/>
</dbReference>
<dbReference type="PRO" id="PR:A0A0A0MT87"/>
<dbReference type="Proteomes" id="UP000005640">
    <property type="component" value="Unplaced"/>
</dbReference>
<dbReference type="GO" id="GO:0042101">
    <property type="term" value="C:T cell receptor complex"/>
    <property type="evidence" value="ECO:0007669"/>
    <property type="project" value="UniProtKB-KW"/>
</dbReference>
<dbReference type="GO" id="GO:0002250">
    <property type="term" value="P:adaptive immune response"/>
    <property type="evidence" value="ECO:0007669"/>
    <property type="project" value="UniProtKB-KW"/>
</dbReference>